<dbReference type="EC" id="6.1.1.3" evidence="1"/>
<dbReference type="EMBL" id="CP001157">
    <property type="protein sequence ID" value="ACO78245.1"/>
    <property type="molecule type" value="Genomic_DNA"/>
</dbReference>
<dbReference type="RefSeq" id="WP_012700654.1">
    <property type="nucleotide sequence ID" value="NC_012560.1"/>
</dbReference>
<dbReference type="SMR" id="C1DF42"/>
<dbReference type="STRING" id="322710.Avin_20420"/>
<dbReference type="EnsemblBacteria" id="ACO78245">
    <property type="protein sequence ID" value="ACO78245"/>
    <property type="gene ID" value="Avin_20420"/>
</dbReference>
<dbReference type="GeneID" id="88185273"/>
<dbReference type="KEGG" id="avn:Avin_20420"/>
<dbReference type="eggNOG" id="COG0441">
    <property type="taxonomic scope" value="Bacteria"/>
</dbReference>
<dbReference type="HOGENOM" id="CLU_008554_0_1_6"/>
<dbReference type="OrthoDB" id="9802304at2"/>
<dbReference type="Proteomes" id="UP000002424">
    <property type="component" value="Chromosome"/>
</dbReference>
<dbReference type="GO" id="GO:0005829">
    <property type="term" value="C:cytosol"/>
    <property type="evidence" value="ECO:0007669"/>
    <property type="project" value="TreeGrafter"/>
</dbReference>
<dbReference type="GO" id="GO:0005524">
    <property type="term" value="F:ATP binding"/>
    <property type="evidence" value="ECO:0007669"/>
    <property type="project" value="UniProtKB-UniRule"/>
</dbReference>
<dbReference type="GO" id="GO:0046872">
    <property type="term" value="F:metal ion binding"/>
    <property type="evidence" value="ECO:0007669"/>
    <property type="project" value="UniProtKB-KW"/>
</dbReference>
<dbReference type="GO" id="GO:0004829">
    <property type="term" value="F:threonine-tRNA ligase activity"/>
    <property type="evidence" value="ECO:0007669"/>
    <property type="project" value="UniProtKB-UniRule"/>
</dbReference>
<dbReference type="GO" id="GO:0000049">
    <property type="term" value="F:tRNA binding"/>
    <property type="evidence" value="ECO:0007669"/>
    <property type="project" value="UniProtKB-KW"/>
</dbReference>
<dbReference type="GO" id="GO:0006435">
    <property type="term" value="P:threonyl-tRNA aminoacylation"/>
    <property type="evidence" value="ECO:0007669"/>
    <property type="project" value="UniProtKB-UniRule"/>
</dbReference>
<dbReference type="CDD" id="cd01667">
    <property type="entry name" value="TGS_ThrRS"/>
    <property type="match status" value="1"/>
</dbReference>
<dbReference type="CDD" id="cd00860">
    <property type="entry name" value="ThrRS_anticodon"/>
    <property type="match status" value="1"/>
</dbReference>
<dbReference type="CDD" id="cd00771">
    <property type="entry name" value="ThrRS_core"/>
    <property type="match status" value="1"/>
</dbReference>
<dbReference type="FunFam" id="3.10.20.30:FF:000005">
    <property type="entry name" value="Threonine--tRNA ligase"/>
    <property type="match status" value="1"/>
</dbReference>
<dbReference type="FunFam" id="3.30.54.20:FF:000002">
    <property type="entry name" value="Threonine--tRNA ligase"/>
    <property type="match status" value="1"/>
</dbReference>
<dbReference type="FunFam" id="3.30.930.10:FF:000002">
    <property type="entry name" value="Threonine--tRNA ligase"/>
    <property type="match status" value="1"/>
</dbReference>
<dbReference type="FunFam" id="3.40.50.800:FF:000001">
    <property type="entry name" value="Threonine--tRNA ligase"/>
    <property type="match status" value="1"/>
</dbReference>
<dbReference type="FunFam" id="3.30.980.10:FF:000005">
    <property type="entry name" value="Threonyl-tRNA synthetase, mitochondrial"/>
    <property type="match status" value="1"/>
</dbReference>
<dbReference type="Gene3D" id="3.10.20.30">
    <property type="match status" value="1"/>
</dbReference>
<dbReference type="Gene3D" id="3.30.54.20">
    <property type="match status" value="1"/>
</dbReference>
<dbReference type="Gene3D" id="3.40.50.800">
    <property type="entry name" value="Anticodon-binding domain"/>
    <property type="match status" value="1"/>
</dbReference>
<dbReference type="Gene3D" id="3.30.930.10">
    <property type="entry name" value="Bira Bifunctional Protein, Domain 2"/>
    <property type="match status" value="1"/>
</dbReference>
<dbReference type="Gene3D" id="3.30.980.10">
    <property type="entry name" value="Threonyl-trna Synthetase, Chain A, domain 2"/>
    <property type="match status" value="1"/>
</dbReference>
<dbReference type="HAMAP" id="MF_00184">
    <property type="entry name" value="Thr_tRNA_synth"/>
    <property type="match status" value="1"/>
</dbReference>
<dbReference type="InterPro" id="IPR002314">
    <property type="entry name" value="aa-tRNA-synt_IIb"/>
</dbReference>
<dbReference type="InterPro" id="IPR006195">
    <property type="entry name" value="aa-tRNA-synth_II"/>
</dbReference>
<dbReference type="InterPro" id="IPR045864">
    <property type="entry name" value="aa-tRNA-synth_II/BPL/LPL"/>
</dbReference>
<dbReference type="InterPro" id="IPR004154">
    <property type="entry name" value="Anticodon-bd"/>
</dbReference>
<dbReference type="InterPro" id="IPR036621">
    <property type="entry name" value="Anticodon-bd_dom_sf"/>
</dbReference>
<dbReference type="InterPro" id="IPR012675">
    <property type="entry name" value="Beta-grasp_dom_sf"/>
</dbReference>
<dbReference type="InterPro" id="IPR004095">
    <property type="entry name" value="TGS"/>
</dbReference>
<dbReference type="InterPro" id="IPR012676">
    <property type="entry name" value="TGS-like"/>
</dbReference>
<dbReference type="InterPro" id="IPR002320">
    <property type="entry name" value="Thr-tRNA-ligase_IIa"/>
</dbReference>
<dbReference type="InterPro" id="IPR018163">
    <property type="entry name" value="Thr/Ala-tRNA-synth_IIc_edit"/>
</dbReference>
<dbReference type="InterPro" id="IPR047246">
    <property type="entry name" value="ThrRS_anticodon"/>
</dbReference>
<dbReference type="InterPro" id="IPR033728">
    <property type="entry name" value="ThrRS_core"/>
</dbReference>
<dbReference type="InterPro" id="IPR012947">
    <property type="entry name" value="tRNA_SAD"/>
</dbReference>
<dbReference type="NCBIfam" id="TIGR00418">
    <property type="entry name" value="thrS"/>
    <property type="match status" value="1"/>
</dbReference>
<dbReference type="PANTHER" id="PTHR11451:SF44">
    <property type="entry name" value="THREONINE--TRNA LIGASE, CHLOROPLASTIC_MITOCHONDRIAL 2"/>
    <property type="match status" value="1"/>
</dbReference>
<dbReference type="PANTHER" id="PTHR11451">
    <property type="entry name" value="THREONINE-TRNA LIGASE"/>
    <property type="match status" value="1"/>
</dbReference>
<dbReference type="Pfam" id="PF03129">
    <property type="entry name" value="HGTP_anticodon"/>
    <property type="match status" value="1"/>
</dbReference>
<dbReference type="Pfam" id="PF02824">
    <property type="entry name" value="TGS"/>
    <property type="match status" value="1"/>
</dbReference>
<dbReference type="Pfam" id="PF00587">
    <property type="entry name" value="tRNA-synt_2b"/>
    <property type="match status" value="1"/>
</dbReference>
<dbReference type="Pfam" id="PF07973">
    <property type="entry name" value="tRNA_SAD"/>
    <property type="match status" value="1"/>
</dbReference>
<dbReference type="PRINTS" id="PR01047">
    <property type="entry name" value="TRNASYNTHTHR"/>
</dbReference>
<dbReference type="SMART" id="SM00863">
    <property type="entry name" value="tRNA_SAD"/>
    <property type="match status" value="1"/>
</dbReference>
<dbReference type="SUPFAM" id="SSF52954">
    <property type="entry name" value="Class II aaRS ABD-related"/>
    <property type="match status" value="1"/>
</dbReference>
<dbReference type="SUPFAM" id="SSF55681">
    <property type="entry name" value="Class II aaRS and biotin synthetases"/>
    <property type="match status" value="1"/>
</dbReference>
<dbReference type="SUPFAM" id="SSF81271">
    <property type="entry name" value="TGS-like"/>
    <property type="match status" value="1"/>
</dbReference>
<dbReference type="SUPFAM" id="SSF55186">
    <property type="entry name" value="ThrRS/AlaRS common domain"/>
    <property type="match status" value="1"/>
</dbReference>
<dbReference type="PROSITE" id="PS50862">
    <property type="entry name" value="AA_TRNA_LIGASE_II"/>
    <property type="match status" value="1"/>
</dbReference>
<dbReference type="PROSITE" id="PS51880">
    <property type="entry name" value="TGS"/>
    <property type="match status" value="1"/>
</dbReference>
<gene>
    <name evidence="1" type="primary">thrS</name>
    <name type="ordered locus">Avin_20420</name>
</gene>
<name>SYT_AZOVD</name>
<organism>
    <name type="scientific">Azotobacter vinelandii (strain DJ / ATCC BAA-1303)</name>
    <dbReference type="NCBI Taxonomy" id="322710"/>
    <lineage>
        <taxon>Bacteria</taxon>
        <taxon>Pseudomonadati</taxon>
        <taxon>Pseudomonadota</taxon>
        <taxon>Gammaproteobacteria</taxon>
        <taxon>Pseudomonadales</taxon>
        <taxon>Pseudomonadaceae</taxon>
        <taxon>Azotobacter</taxon>
    </lineage>
</organism>
<sequence length="640" mass="73112">MPIITLPDGSQRTFDHPVSVAEVAQSIGAGLAKATVAGKVDGKLVDACDLIDHDATLQIITPKDEEGVEIIRHSCAHLVGHAVKQLYPTAKMVIGPVIDEGFYYDIAYERPFTPEDVAAIEQRMRELIDRDYDVVKKMTPREQVIEVFKSRGEDYKLRLIDDMPDEKAMGLYYHEEYVDMCRGPHVPNTRFLKAFKLTKLSGAYWRGDAKNEQLQRVYGTAWADKKQLAAYIQRIEEAEKRDHRKLGKRLDLFHTQEEAPGMVFWHPNGWTVYQVLEQYMRAVQRENGYLEIKTPQVVDRVLWEKSGHWANYAENMFTTESESRDYAIKPMNCPCHVQVYNQGLKSYRELPLRLAEFGACHRNEPSGALHGIMRVRGFTQDDAHIFCTEEQMQAESAAFIKLTRQVYADFGFQDIQLKLSTRPERRVGSGELWDRAEEALAAALESAGLPYELQPGEGAFYGPKIEFSLKDCLGRVWQCGTLQLDFNLPVRLGAEYVSENNERQHPVMLHRAILGSFERFIGILIEHYEGAFPAWLAPTQAVIMNITDKQGEFALEVERTLNQGGFRAKCDLRNEKIGFKIREHTLLKVPYLLVIGDREVETHSVAVRTREGVDLGTMPVEQFREMLAQAVARRGRQELE</sequence>
<accession>C1DF42</accession>
<evidence type="ECO:0000255" key="1">
    <source>
        <dbReference type="HAMAP-Rule" id="MF_00184"/>
    </source>
</evidence>
<evidence type="ECO:0000255" key="2">
    <source>
        <dbReference type="PROSITE-ProRule" id="PRU01228"/>
    </source>
</evidence>
<keyword id="KW-0030">Aminoacyl-tRNA synthetase</keyword>
<keyword id="KW-0067">ATP-binding</keyword>
<keyword id="KW-0963">Cytoplasm</keyword>
<keyword id="KW-0436">Ligase</keyword>
<keyword id="KW-0479">Metal-binding</keyword>
<keyword id="KW-0547">Nucleotide-binding</keyword>
<keyword id="KW-0648">Protein biosynthesis</keyword>
<keyword id="KW-0694">RNA-binding</keyword>
<keyword id="KW-0820">tRNA-binding</keyword>
<keyword id="KW-0862">Zinc</keyword>
<reference key="1">
    <citation type="journal article" date="2009" name="J. Bacteriol.">
        <title>Genome sequence of Azotobacter vinelandii, an obligate aerobe specialized to support diverse anaerobic metabolic processes.</title>
        <authorList>
            <person name="Setubal J.C."/>
            <person name="Dos Santos P."/>
            <person name="Goldman B.S."/>
            <person name="Ertesvaag H."/>
            <person name="Espin G."/>
            <person name="Rubio L.M."/>
            <person name="Valla S."/>
            <person name="Almeida N.F."/>
            <person name="Balasubramanian D."/>
            <person name="Cromes L."/>
            <person name="Curatti L."/>
            <person name="Du Z."/>
            <person name="Godsy E."/>
            <person name="Goodner B."/>
            <person name="Hellner-Burris K."/>
            <person name="Hernandez J.A."/>
            <person name="Houmiel K."/>
            <person name="Imperial J."/>
            <person name="Kennedy C."/>
            <person name="Larson T.J."/>
            <person name="Latreille P."/>
            <person name="Ligon L.S."/>
            <person name="Lu J."/>
            <person name="Maerk M."/>
            <person name="Miller N.M."/>
            <person name="Norton S."/>
            <person name="O'Carroll I.P."/>
            <person name="Paulsen I."/>
            <person name="Raulfs E.C."/>
            <person name="Roemer R."/>
            <person name="Rosser J."/>
            <person name="Segura D."/>
            <person name="Slater S."/>
            <person name="Stricklin S.L."/>
            <person name="Studholme D.J."/>
            <person name="Sun J."/>
            <person name="Viana C.J."/>
            <person name="Wallin E."/>
            <person name="Wang B."/>
            <person name="Wheeler C."/>
            <person name="Zhu H."/>
            <person name="Dean D.R."/>
            <person name="Dixon R."/>
            <person name="Wood D."/>
        </authorList>
    </citation>
    <scope>NUCLEOTIDE SEQUENCE [LARGE SCALE GENOMIC DNA]</scope>
    <source>
        <strain>DJ / ATCC BAA-1303</strain>
    </source>
</reference>
<feature type="chain" id="PRO_1000203897" description="Threonine--tRNA ligase">
    <location>
        <begin position="1"/>
        <end position="640"/>
    </location>
</feature>
<feature type="domain" description="TGS" evidence="2">
    <location>
        <begin position="1"/>
        <end position="61"/>
    </location>
</feature>
<feature type="region of interest" description="Catalytic" evidence="1">
    <location>
        <begin position="242"/>
        <end position="533"/>
    </location>
</feature>
<feature type="binding site" evidence="1">
    <location>
        <position position="333"/>
    </location>
    <ligand>
        <name>Zn(2+)</name>
        <dbReference type="ChEBI" id="CHEBI:29105"/>
    </ligand>
</feature>
<feature type="binding site" evidence="1">
    <location>
        <position position="384"/>
    </location>
    <ligand>
        <name>Zn(2+)</name>
        <dbReference type="ChEBI" id="CHEBI:29105"/>
    </ligand>
</feature>
<feature type="binding site" evidence="1">
    <location>
        <position position="510"/>
    </location>
    <ligand>
        <name>Zn(2+)</name>
        <dbReference type="ChEBI" id="CHEBI:29105"/>
    </ligand>
</feature>
<proteinExistence type="inferred from homology"/>
<comment type="function">
    <text evidence="1">Catalyzes the attachment of threonine to tRNA(Thr) in a two-step reaction: L-threonine is first activated by ATP to form Thr-AMP and then transferred to the acceptor end of tRNA(Thr). Also edits incorrectly charged L-seryl-tRNA(Thr).</text>
</comment>
<comment type="catalytic activity">
    <reaction evidence="1">
        <text>tRNA(Thr) + L-threonine + ATP = L-threonyl-tRNA(Thr) + AMP + diphosphate + H(+)</text>
        <dbReference type="Rhea" id="RHEA:24624"/>
        <dbReference type="Rhea" id="RHEA-COMP:9670"/>
        <dbReference type="Rhea" id="RHEA-COMP:9704"/>
        <dbReference type="ChEBI" id="CHEBI:15378"/>
        <dbReference type="ChEBI" id="CHEBI:30616"/>
        <dbReference type="ChEBI" id="CHEBI:33019"/>
        <dbReference type="ChEBI" id="CHEBI:57926"/>
        <dbReference type="ChEBI" id="CHEBI:78442"/>
        <dbReference type="ChEBI" id="CHEBI:78534"/>
        <dbReference type="ChEBI" id="CHEBI:456215"/>
        <dbReference type="EC" id="6.1.1.3"/>
    </reaction>
</comment>
<comment type="cofactor">
    <cofactor evidence="1">
        <name>Zn(2+)</name>
        <dbReference type="ChEBI" id="CHEBI:29105"/>
    </cofactor>
    <text evidence="1">Binds 1 zinc ion per subunit.</text>
</comment>
<comment type="subunit">
    <text evidence="1">Homodimer.</text>
</comment>
<comment type="subcellular location">
    <subcellularLocation>
        <location evidence="1">Cytoplasm</location>
    </subcellularLocation>
</comment>
<comment type="similarity">
    <text evidence="1">Belongs to the class-II aminoacyl-tRNA synthetase family.</text>
</comment>
<protein>
    <recommendedName>
        <fullName evidence="1">Threonine--tRNA ligase</fullName>
        <ecNumber evidence="1">6.1.1.3</ecNumber>
    </recommendedName>
    <alternativeName>
        <fullName evidence="1">Threonyl-tRNA synthetase</fullName>
        <shortName evidence="1">ThrRS</shortName>
    </alternativeName>
</protein>